<keyword id="KW-0012">Acyltransferase</keyword>
<keyword id="KW-0808">Transferase</keyword>
<feature type="chain" id="PRO_0000410832" description="Octanoyl-[GcvH]:protein N-octanoyltransferase">
    <location>
        <begin position="1"/>
        <end position="275"/>
    </location>
</feature>
<feature type="domain" description="BPL/LPL catalytic" evidence="2">
    <location>
        <begin position="42"/>
        <end position="246"/>
    </location>
</feature>
<feature type="active site" description="Acyl-thioester intermediate" evidence="1">
    <location>
        <position position="145"/>
    </location>
</feature>
<feature type="site" description="Lowers pKa of active site Cys" evidence="1">
    <location>
        <position position="157"/>
    </location>
</feature>
<organism>
    <name type="scientific">Anoxybacillus flavithermus (strain DSM 21510 / WK1)</name>
    <dbReference type="NCBI Taxonomy" id="491915"/>
    <lineage>
        <taxon>Bacteria</taxon>
        <taxon>Bacillati</taxon>
        <taxon>Bacillota</taxon>
        <taxon>Bacilli</taxon>
        <taxon>Bacillales</taxon>
        <taxon>Anoxybacillaceae</taxon>
        <taxon>Anoxybacillus</taxon>
    </lineage>
</organism>
<comment type="function">
    <text evidence="1">Catalyzes the amidotransfer (transamidation) of the octanoyl moiety from octanoyl-GcvH to the lipoyl domain of the E2 subunit of lipoate-dependent enzymes.</text>
</comment>
<comment type="catalytic activity">
    <reaction evidence="1">
        <text>N(6)-octanoyl-L-lysyl-[glycine-cleavage complex H protein] + L-lysyl-[lipoyl-carrier protein] = N(6)-octanoyl-L-lysyl-[lipoyl-carrier protein] + L-lysyl-[glycine-cleavage complex H protein]</text>
        <dbReference type="Rhea" id="RHEA:20213"/>
        <dbReference type="Rhea" id="RHEA-COMP:10500"/>
        <dbReference type="Rhea" id="RHEA-COMP:10501"/>
        <dbReference type="Rhea" id="RHEA-COMP:10503"/>
        <dbReference type="Rhea" id="RHEA-COMP:10504"/>
        <dbReference type="ChEBI" id="CHEBI:29969"/>
        <dbReference type="ChEBI" id="CHEBI:78809"/>
        <dbReference type="EC" id="2.3.1.204"/>
    </reaction>
</comment>
<comment type="pathway">
    <text evidence="1">Protein modification; protein lipoylation via endogenous pathway; protein N(6)-(lipoyl)lysine from octanoyl-[acyl-carrier-protein].</text>
</comment>
<comment type="miscellaneous">
    <text evidence="1">The reaction proceeds via a thioester-linked acyl-enzyme intermediate.</text>
</comment>
<comment type="similarity">
    <text evidence="1">Belongs to the octanoyltransferase LipL family.</text>
</comment>
<comment type="sequence caution" evidence="3">
    <conflict type="erroneous initiation">
        <sequence resource="EMBL-CDS" id="ACJ35112"/>
    </conflict>
    <text>Extended N-terminus.</text>
</comment>
<reference key="1">
    <citation type="journal article" date="2008" name="Genome Biol.">
        <title>Encapsulated in silica: genome, proteome and physiology of the thermophilic bacterium Anoxybacillus flavithermus WK1.</title>
        <authorList>
            <person name="Saw J.H."/>
            <person name="Mountain B.W."/>
            <person name="Feng L."/>
            <person name="Omelchenko M.V."/>
            <person name="Hou S."/>
            <person name="Saito J.A."/>
            <person name="Stott M.B."/>
            <person name="Li D."/>
            <person name="Zhao G."/>
            <person name="Wu J."/>
            <person name="Galperin M.Y."/>
            <person name="Koonin E.V."/>
            <person name="Makarova K.S."/>
            <person name="Wolf Y.I."/>
            <person name="Rigden D.J."/>
            <person name="Dunfield P.F."/>
            <person name="Wang L."/>
            <person name="Alam M."/>
        </authorList>
    </citation>
    <scope>NUCLEOTIDE SEQUENCE [LARGE SCALE GENOMIC DNA]</scope>
    <source>
        <strain>DSM 21510 / WK1</strain>
    </source>
</reference>
<proteinExistence type="inferred from homology"/>
<protein>
    <recommendedName>
        <fullName evidence="1">Octanoyl-[GcvH]:protein N-octanoyltransferase</fullName>
        <ecNumber evidence="1">2.3.1.204</ecNumber>
    </recommendedName>
    <alternativeName>
        <fullName evidence="1">Octanoyl-[GcvH]:E2 amidotransferase</fullName>
    </alternativeName>
</protein>
<name>LIPL_ANOFW</name>
<accession>B7GML0</accession>
<gene>
    <name evidence="1" type="primary">lipL</name>
    <name type="ordered locus">Aflv_2759</name>
</gene>
<evidence type="ECO:0000255" key="1">
    <source>
        <dbReference type="HAMAP-Rule" id="MF_02119"/>
    </source>
</evidence>
<evidence type="ECO:0000255" key="2">
    <source>
        <dbReference type="PROSITE-ProRule" id="PRU01067"/>
    </source>
</evidence>
<evidence type="ECO:0000305" key="3"/>
<sequence>MMSELLQQQTWRVIDHTSLGPSFDAKQSFAFDDALCESVGSGQSQPVVRLWVHHQTVVLGIQDTKLPYIEKGLAYLHEQGWRTIVRNSGGLAVVLDEGVLNVSLIFPDTKKGIDIDRGYEAMATLIAHMLPEAHVQTGEVVGSYCPGSFDLSINGKKFAGISQRRIRGGVAVQVYICVNGSGAERAGWIREFYERSLAGEQTKFTYPTIVPHTMASLSELLSKEMTVSALVIRLYEALQAFGSRLEPSSLTPAEWERYYMYFQRMIDRNETMLPT</sequence>
<dbReference type="EC" id="2.3.1.204" evidence="1"/>
<dbReference type="EMBL" id="CP000922">
    <property type="protein sequence ID" value="ACJ35112.1"/>
    <property type="status" value="ALT_INIT"/>
    <property type="molecule type" value="Genomic_DNA"/>
</dbReference>
<dbReference type="RefSeq" id="WP_041639174.1">
    <property type="nucleotide sequence ID" value="NC_011567.1"/>
</dbReference>
<dbReference type="SMR" id="B7GML0"/>
<dbReference type="STRING" id="491915.Aflv_2759"/>
<dbReference type="GeneID" id="7039032"/>
<dbReference type="KEGG" id="afl:Aflv_2759"/>
<dbReference type="PATRIC" id="fig|491915.6.peg.2842"/>
<dbReference type="eggNOG" id="COG0095">
    <property type="taxonomic scope" value="Bacteria"/>
</dbReference>
<dbReference type="HOGENOM" id="CLU_067270_0_0_9"/>
<dbReference type="Proteomes" id="UP000000742">
    <property type="component" value="Chromosome"/>
</dbReference>
<dbReference type="GO" id="GO:0033819">
    <property type="term" value="F:lipoyl(octanoyl) transferase activity"/>
    <property type="evidence" value="ECO:0007669"/>
    <property type="project" value="InterPro"/>
</dbReference>
<dbReference type="GO" id="GO:0009107">
    <property type="term" value="P:lipoate biosynthetic process"/>
    <property type="evidence" value="ECO:0007669"/>
    <property type="project" value="UniProtKB-UniRule"/>
</dbReference>
<dbReference type="GO" id="GO:0036211">
    <property type="term" value="P:protein modification process"/>
    <property type="evidence" value="ECO:0007669"/>
    <property type="project" value="InterPro"/>
</dbReference>
<dbReference type="CDD" id="cd16443">
    <property type="entry name" value="LplA"/>
    <property type="match status" value="1"/>
</dbReference>
<dbReference type="Gene3D" id="3.30.930.10">
    <property type="entry name" value="Bira Bifunctional Protein, Domain 2"/>
    <property type="match status" value="1"/>
</dbReference>
<dbReference type="HAMAP" id="MF_02119">
    <property type="entry name" value="LipL"/>
    <property type="match status" value="1"/>
</dbReference>
<dbReference type="InterPro" id="IPR045864">
    <property type="entry name" value="aa-tRNA-synth_II/BPL/LPL"/>
</dbReference>
<dbReference type="InterPro" id="IPR004143">
    <property type="entry name" value="BPL_LPL_catalytic"/>
</dbReference>
<dbReference type="InterPro" id="IPR024897">
    <property type="entry name" value="LipL"/>
</dbReference>
<dbReference type="InterPro" id="IPR050664">
    <property type="entry name" value="Octanoyltrans_LipM/LipL"/>
</dbReference>
<dbReference type="PANTHER" id="PTHR43679:SF2">
    <property type="entry name" value="OCTANOYL-[GCVH]:PROTEIN N-OCTANOYLTRANSFERASE"/>
    <property type="match status" value="1"/>
</dbReference>
<dbReference type="PANTHER" id="PTHR43679">
    <property type="entry name" value="OCTANOYLTRANSFERASE LIPM-RELATED"/>
    <property type="match status" value="1"/>
</dbReference>
<dbReference type="Pfam" id="PF21948">
    <property type="entry name" value="LplA-B_cat"/>
    <property type="match status" value="1"/>
</dbReference>
<dbReference type="SUPFAM" id="SSF55681">
    <property type="entry name" value="Class II aaRS and biotin synthetases"/>
    <property type="match status" value="1"/>
</dbReference>
<dbReference type="PROSITE" id="PS51733">
    <property type="entry name" value="BPL_LPL_CATALYTIC"/>
    <property type="match status" value="1"/>
</dbReference>